<evidence type="ECO:0000255" key="1">
    <source>
        <dbReference type="HAMAP-Rule" id="MF_01633"/>
    </source>
</evidence>
<name>QUEC_BORA1</name>
<proteinExistence type="inferred from homology"/>
<keyword id="KW-0067">ATP-binding</keyword>
<keyword id="KW-0436">Ligase</keyword>
<keyword id="KW-0479">Metal-binding</keyword>
<keyword id="KW-0547">Nucleotide-binding</keyword>
<keyword id="KW-0671">Queuosine biosynthesis</keyword>
<keyword id="KW-1185">Reference proteome</keyword>
<keyword id="KW-0862">Zinc</keyword>
<comment type="function">
    <text evidence="1">Catalyzes the ATP-dependent conversion of 7-carboxy-7-deazaguanine (CDG) to 7-cyano-7-deazaguanine (preQ(0)).</text>
</comment>
<comment type="catalytic activity">
    <reaction evidence="1">
        <text>7-carboxy-7-deazaguanine + NH4(+) + ATP = 7-cyano-7-deazaguanine + ADP + phosphate + H2O + H(+)</text>
        <dbReference type="Rhea" id="RHEA:27982"/>
        <dbReference type="ChEBI" id="CHEBI:15377"/>
        <dbReference type="ChEBI" id="CHEBI:15378"/>
        <dbReference type="ChEBI" id="CHEBI:28938"/>
        <dbReference type="ChEBI" id="CHEBI:30616"/>
        <dbReference type="ChEBI" id="CHEBI:43474"/>
        <dbReference type="ChEBI" id="CHEBI:45075"/>
        <dbReference type="ChEBI" id="CHEBI:61036"/>
        <dbReference type="ChEBI" id="CHEBI:456216"/>
        <dbReference type="EC" id="6.3.4.20"/>
    </reaction>
</comment>
<comment type="cofactor">
    <cofactor evidence="1">
        <name>Zn(2+)</name>
        <dbReference type="ChEBI" id="CHEBI:29105"/>
    </cofactor>
    <text evidence="1">Binds 1 zinc ion per subunit.</text>
</comment>
<comment type="pathway">
    <text evidence="1">Purine metabolism; 7-cyano-7-deazaguanine biosynthesis.</text>
</comment>
<comment type="similarity">
    <text evidence="1">Belongs to the QueC family.</text>
</comment>
<dbReference type="EC" id="6.3.4.20" evidence="1"/>
<dbReference type="EMBL" id="AM167904">
    <property type="protein sequence ID" value="CAJ47924.1"/>
    <property type="molecule type" value="Genomic_DNA"/>
</dbReference>
<dbReference type="SMR" id="Q2KZT1"/>
<dbReference type="STRING" id="360910.BAV0319"/>
<dbReference type="KEGG" id="bav:BAV0319"/>
<dbReference type="eggNOG" id="COG0603">
    <property type="taxonomic scope" value="Bacteria"/>
</dbReference>
<dbReference type="HOGENOM" id="CLU_081854_0_0_4"/>
<dbReference type="UniPathway" id="UPA00391"/>
<dbReference type="Proteomes" id="UP000001977">
    <property type="component" value="Chromosome"/>
</dbReference>
<dbReference type="GO" id="GO:0005524">
    <property type="term" value="F:ATP binding"/>
    <property type="evidence" value="ECO:0007669"/>
    <property type="project" value="UniProtKB-UniRule"/>
</dbReference>
<dbReference type="GO" id="GO:0016879">
    <property type="term" value="F:ligase activity, forming carbon-nitrogen bonds"/>
    <property type="evidence" value="ECO:0007669"/>
    <property type="project" value="UniProtKB-UniRule"/>
</dbReference>
<dbReference type="GO" id="GO:0008270">
    <property type="term" value="F:zinc ion binding"/>
    <property type="evidence" value="ECO:0007669"/>
    <property type="project" value="UniProtKB-UniRule"/>
</dbReference>
<dbReference type="GO" id="GO:0008616">
    <property type="term" value="P:queuosine biosynthetic process"/>
    <property type="evidence" value="ECO:0007669"/>
    <property type="project" value="UniProtKB-UniRule"/>
</dbReference>
<dbReference type="CDD" id="cd01995">
    <property type="entry name" value="QueC-like"/>
    <property type="match status" value="1"/>
</dbReference>
<dbReference type="Gene3D" id="3.40.50.620">
    <property type="entry name" value="HUPs"/>
    <property type="match status" value="1"/>
</dbReference>
<dbReference type="HAMAP" id="MF_01633">
    <property type="entry name" value="QueC"/>
    <property type="match status" value="1"/>
</dbReference>
<dbReference type="InterPro" id="IPR018317">
    <property type="entry name" value="QueC"/>
</dbReference>
<dbReference type="InterPro" id="IPR014729">
    <property type="entry name" value="Rossmann-like_a/b/a_fold"/>
</dbReference>
<dbReference type="NCBIfam" id="TIGR00364">
    <property type="entry name" value="7-cyano-7-deazaguanine synthase QueC"/>
    <property type="match status" value="1"/>
</dbReference>
<dbReference type="PANTHER" id="PTHR42914">
    <property type="entry name" value="7-CYANO-7-DEAZAGUANINE SYNTHASE"/>
    <property type="match status" value="1"/>
</dbReference>
<dbReference type="PANTHER" id="PTHR42914:SF1">
    <property type="entry name" value="7-CYANO-7-DEAZAGUANINE SYNTHASE"/>
    <property type="match status" value="1"/>
</dbReference>
<dbReference type="Pfam" id="PF06508">
    <property type="entry name" value="QueC"/>
    <property type="match status" value="1"/>
</dbReference>
<dbReference type="PIRSF" id="PIRSF006293">
    <property type="entry name" value="ExsB"/>
    <property type="match status" value="1"/>
</dbReference>
<dbReference type="SUPFAM" id="SSF52402">
    <property type="entry name" value="Adenine nucleotide alpha hydrolases-like"/>
    <property type="match status" value="1"/>
</dbReference>
<organism>
    <name type="scientific">Bordetella avium (strain 197N)</name>
    <dbReference type="NCBI Taxonomy" id="360910"/>
    <lineage>
        <taxon>Bacteria</taxon>
        <taxon>Pseudomonadati</taxon>
        <taxon>Pseudomonadota</taxon>
        <taxon>Betaproteobacteria</taxon>
        <taxon>Burkholderiales</taxon>
        <taxon>Alcaligenaceae</taxon>
        <taxon>Bordetella</taxon>
    </lineage>
</organism>
<protein>
    <recommendedName>
        <fullName evidence="1">7-cyano-7-deazaguanine synthase</fullName>
        <ecNumber evidence="1">6.3.4.20</ecNumber>
    </recommendedName>
    <alternativeName>
        <fullName evidence="1">7-cyano-7-carbaguanine synthase</fullName>
    </alternativeName>
    <alternativeName>
        <fullName evidence="1">PreQ(0) synthase</fullName>
    </alternativeName>
    <alternativeName>
        <fullName evidence="1">Queuosine biosynthesis protein QueC</fullName>
    </alternativeName>
</protein>
<reference key="1">
    <citation type="journal article" date="2006" name="J. Bacteriol.">
        <title>Comparison of the genome sequence of the poultry pathogen Bordetella avium with those of B. bronchiseptica, B. pertussis, and B. parapertussis reveals extensive diversity in surface structures associated with host interaction.</title>
        <authorList>
            <person name="Sebaihia M."/>
            <person name="Preston A."/>
            <person name="Maskell D.J."/>
            <person name="Kuzmiak H."/>
            <person name="Connell T.D."/>
            <person name="King N.D."/>
            <person name="Orndorff P.E."/>
            <person name="Miyamoto D.M."/>
            <person name="Thomson N.R."/>
            <person name="Harris D."/>
            <person name="Goble A."/>
            <person name="Lord A."/>
            <person name="Murphy L."/>
            <person name="Quail M.A."/>
            <person name="Rutter S."/>
            <person name="Squares R."/>
            <person name="Squares S."/>
            <person name="Woodward J."/>
            <person name="Parkhill J."/>
            <person name="Temple L.M."/>
        </authorList>
    </citation>
    <scope>NUCLEOTIDE SEQUENCE [LARGE SCALE GENOMIC DNA]</scope>
    <source>
        <strain>197N</strain>
    </source>
</reference>
<accession>Q2KZT1</accession>
<sequence>MHFPVFIMQNHQRRALVLFSGGQDSTTCLAWALDRYAHVETVAFDYGQRHRIELDARLNVLREIRGRFPAWAARLGQDHLLDLKVLGQVGDTAMTSDRAIEMQANGLPNTFVPGRNLLFLTLAAALGYRRQLDVLVGGMCETDFSGYPDCRDDTMKAQQVALSLGLGSRVTIETPLMWLDKADTWALADSLGGESLVQTIVEESHTCYVGERGQRHDWGYGCGECPACVLRKAGWSRWAERAPR</sequence>
<feature type="chain" id="PRO_0000246808" description="7-cyano-7-deazaguanine synthase">
    <location>
        <begin position="1"/>
        <end position="244"/>
    </location>
</feature>
<feature type="binding site" evidence="1">
    <location>
        <begin position="19"/>
        <end position="29"/>
    </location>
    <ligand>
        <name>ATP</name>
        <dbReference type="ChEBI" id="CHEBI:30616"/>
    </ligand>
</feature>
<feature type="binding site" evidence="1">
    <location>
        <position position="207"/>
    </location>
    <ligand>
        <name>Zn(2+)</name>
        <dbReference type="ChEBI" id="CHEBI:29105"/>
    </ligand>
</feature>
<feature type="binding site" evidence="1">
    <location>
        <position position="222"/>
    </location>
    <ligand>
        <name>Zn(2+)</name>
        <dbReference type="ChEBI" id="CHEBI:29105"/>
    </ligand>
</feature>
<feature type="binding site" evidence="1">
    <location>
        <position position="225"/>
    </location>
    <ligand>
        <name>Zn(2+)</name>
        <dbReference type="ChEBI" id="CHEBI:29105"/>
    </ligand>
</feature>
<feature type="binding site" evidence="1">
    <location>
        <position position="228"/>
    </location>
    <ligand>
        <name>Zn(2+)</name>
        <dbReference type="ChEBI" id="CHEBI:29105"/>
    </ligand>
</feature>
<gene>
    <name evidence="1" type="primary">queC</name>
    <name type="ordered locus">BAV0319</name>
</gene>